<evidence type="ECO:0000250" key="1"/>
<evidence type="ECO:0000250" key="2">
    <source>
        <dbReference type="UniProtKB" id="Q786F3"/>
    </source>
</evidence>
<evidence type="ECO:0000255" key="3"/>
<evidence type="ECO:0000256" key="4">
    <source>
        <dbReference type="SAM" id="MobiDB-lite"/>
    </source>
</evidence>
<evidence type="ECO:0000305" key="5"/>
<protein>
    <recommendedName>
        <fullName>Fusion glycoprotein F0</fullName>
    </recommendedName>
    <component>
        <recommendedName>
            <fullName>Fusion glycoprotein F2</fullName>
        </recommendedName>
    </component>
    <component>
        <recommendedName>
            <fullName>Fusion glycoprotein F1</fullName>
        </recommendedName>
    </component>
</protein>
<organism>
    <name type="scientific">Canine distemper virus (strain Onderstepoort)</name>
    <name type="common">CDV</name>
    <dbReference type="NCBI Taxonomy" id="11233"/>
    <lineage>
        <taxon>Viruses</taxon>
        <taxon>Riboviria</taxon>
        <taxon>Orthornavirae</taxon>
        <taxon>Negarnaviricota</taxon>
        <taxon>Haploviricotina</taxon>
        <taxon>Monjiviricetes</taxon>
        <taxon>Mononegavirales</taxon>
        <taxon>Paramyxoviridae</taxon>
        <taxon>Orthoparamyxovirinae</taxon>
        <taxon>Morbillivirus</taxon>
        <taxon>Morbillivirus canis</taxon>
    </lineage>
</organism>
<organismHost>
    <name type="scientific">Ailuropoda melanoleuca</name>
    <name type="common">Giant panda</name>
    <dbReference type="NCBI Taxonomy" id="9646"/>
</organismHost>
<organismHost>
    <name type="scientific">Ailurus fulgens</name>
    <name type="common">Himalayan red panda</name>
    <dbReference type="NCBI Taxonomy" id="9649"/>
</organismHost>
<organismHost>
    <name type="scientific">Canis lupus familiaris</name>
    <name type="common">Dog</name>
    <name type="synonym">Canis familiaris</name>
    <dbReference type="NCBI Taxonomy" id="9615"/>
</organismHost>
<organismHost>
    <name type="scientific">Mustela</name>
    <dbReference type="NCBI Taxonomy" id="9665"/>
</organismHost>
<organismHost>
    <name type="scientific">Panthera leo</name>
    <name type="common">Lion</name>
    <dbReference type="NCBI Taxonomy" id="9689"/>
</organismHost>
<organismHost>
    <name type="scientific">Procyon lotor</name>
    <name type="common">Raccoon</name>
    <dbReference type="NCBI Taxonomy" id="9654"/>
</organismHost>
<organismHost>
    <name type="scientific">Zalophus californianus</name>
    <name type="common">California sealion</name>
    <dbReference type="NCBI Taxonomy" id="9704"/>
</organismHost>
<name>FUS_CDVO</name>
<reference key="1">
    <citation type="journal article" date="1987" name="Virus Res.">
        <title>The nucleotide sequence of the gene encoding the F protein of canine distemper virus: a comparison of the deduced amino acid sequence with other paramyxoviruses.</title>
        <authorList>
            <person name="Barrett T."/>
            <person name="Clarke D.K."/>
            <person name="Evans S.A."/>
            <person name="Rima B.K."/>
        </authorList>
    </citation>
    <scope>NUCLEOTIDE SEQUENCE [GENOMIC RNA]</scope>
</reference>
<reference key="2">
    <citation type="journal article" date="1993" name="Vaccine">
        <title>Vaccination of mice against canine distemper virus-induced encephalitis with vaccinia virus recombinants encoding measles or canine distemper virus antigens.</title>
        <authorList>
            <person name="Wild T.F."/>
            <person name="Bernard A."/>
            <person name="Spehner D."/>
            <person name="Villeval D."/>
            <person name="Drillien R."/>
        </authorList>
    </citation>
    <scope>NUCLEOTIDE SEQUENCE [GENOMIC RNA]</scope>
</reference>
<reference key="3">
    <citation type="journal article" date="2002" name="J. Virol.">
        <title>Amino-terminal precursor sequence modulates canine distemper virus fusion protein function.</title>
        <authorList>
            <person name="von Messling V."/>
            <person name="Cattaneo R."/>
        </authorList>
    </citation>
    <scope>CLEAVAGE OF N-TERMINUS</scope>
</reference>
<sequence>MHRGIPKSSKTQTHTQQDRPPQPSTELEETRTSRARHSTTSAQRSTHYDPRTSDRPVSYTMNRTRSRKQTSHRLKNIPVHGNHEATIQHIPESVSKGARSQIERRQPNAINSGSHCTWLVLWCLGMASLFLCSKAQIHWDNLSTIGIIGTDNVHYKIMTRPSHQYLVIKLIPNASLIENCTKAELGEYEKLLNSVLEPINQALTLMTKNVKPLQSLGSGRRQRRFAGVVLAGVALGVATAAQITAGIALHQSNLNAQAIQSLRTSLEQSNKAIEEIREATQETVIAVQGVQDYVNNELVPAMQHMSCELVGQRLGLRLLRYYTELLSIFGPSLRDPISAEISIQALIYALGGEIHKILEKLGYSGSDMIAILESRGIKTKITHVDLPGKFIILSISYPTLSEVKGVIVHRLEAVSYNIGSQEWYTTVPRYIATNGYLISNFDESSCVFVSESAICSQNSLYPMSPLLQQCIRGDTSSCARTLVSGTMGNKFILSKGNIVANCASILCKCYSTSTIINQSPDKLLTFIASDTCPLVEIDGATIQVGGRQYPDMVYEGKVALGPAISLDRLDVGTNLGNALKKLDDAKVLIDSSNQILETVRRSSFNFGSLLSVPILSCTALALLLLIYCCKRRYQQTLKQHTKVDPAFKPDLTGTSKSYVRSL</sequence>
<feature type="signal peptide" evidence="3">
    <location>
        <begin position="1"/>
        <end position="135"/>
    </location>
</feature>
<feature type="chain" id="PRO_0000039251" description="Fusion glycoprotein F0">
    <location>
        <begin position="136"/>
        <end position="662"/>
    </location>
</feature>
<feature type="chain" id="PRO_0000039249" description="Fusion glycoprotein F2">
    <location>
        <begin position="136"/>
        <end position="224"/>
    </location>
</feature>
<feature type="chain" id="PRO_0000039250" description="Fusion glycoprotein F1">
    <location>
        <begin position="225"/>
        <end position="662"/>
    </location>
</feature>
<feature type="topological domain" description="Extracellular" evidence="1">
    <location>
        <begin position="136"/>
        <end position="608"/>
    </location>
</feature>
<feature type="transmembrane region" description="Helical" evidence="3">
    <location>
        <begin position="609"/>
        <end position="629"/>
    </location>
</feature>
<feature type="topological domain" description="Cytoplasmic" evidence="1">
    <location>
        <begin position="630"/>
        <end position="662"/>
    </location>
</feature>
<feature type="region of interest" description="Disordered" evidence="4">
    <location>
        <begin position="1"/>
        <end position="73"/>
    </location>
</feature>
<feature type="region of interest" description="Fusion peptide" evidence="1">
    <location>
        <begin position="225"/>
        <end position="249"/>
    </location>
</feature>
<feature type="coiled-coil region" evidence="3">
    <location>
        <begin position="250"/>
        <end position="278"/>
    </location>
</feature>
<feature type="coiled-coil region" evidence="3">
    <location>
        <begin position="574"/>
        <end position="599"/>
    </location>
</feature>
<feature type="compositionally biased region" description="Polar residues" evidence="4">
    <location>
        <begin position="8"/>
        <end position="19"/>
    </location>
</feature>
<feature type="compositionally biased region" description="Basic residues" evidence="4">
    <location>
        <begin position="64"/>
        <end position="73"/>
    </location>
</feature>
<feature type="site" description="Cleavage; by host" evidence="1">
    <location>
        <begin position="224"/>
        <end position="225"/>
    </location>
</feature>
<feature type="glycosylation site" description="N-linked (GlcNAc...) asparagine; by host" evidence="2">
    <location>
        <position position="141"/>
    </location>
</feature>
<feature type="glycosylation site" description="N-linked (GlcNAc...) asparagine; by host" evidence="2">
    <location>
        <position position="173"/>
    </location>
</feature>
<feature type="glycosylation site" description="N-linked (GlcNAc...) asparagine; by host" evidence="3">
    <location>
        <position position="179"/>
    </location>
</feature>
<feature type="disulfide bond" description="Interchain (with C-195)" evidence="2">
    <location>
        <position position="180"/>
    </location>
</feature>
<feature type="disulfide bond" description="Interchain (with C-68)" evidence="2">
    <location>
        <position position="307"/>
    </location>
</feature>
<feature type="disulfide bond" evidence="2">
    <location>
        <begin position="446"/>
        <end position="455"/>
    </location>
</feature>
<feature type="disulfide bond" evidence="2">
    <location>
        <begin position="470"/>
        <end position="478"/>
    </location>
</feature>
<feature type="disulfide bond" evidence="2">
    <location>
        <begin position="502"/>
        <end position="507"/>
    </location>
</feature>
<feature type="disulfide bond" evidence="2">
    <location>
        <begin position="509"/>
        <end position="532"/>
    </location>
</feature>
<feature type="sequence conflict" description="In Ref. 2; CAA46481." evidence="5" ref="2">
    <original>R</original>
    <variation>K</variation>
    <location>
        <position position="3"/>
    </location>
</feature>
<feature type="sequence conflict" description="In Ref. 2; CAA46481." evidence="5" ref="2">
    <original>D</original>
    <variation>N</variation>
    <location>
        <position position="140"/>
    </location>
</feature>
<feature type="sequence conflict" description="In Ref. 2; CAA46481." evidence="5" ref="2">
    <original>N</original>
    <variation>S</variation>
    <location>
        <position position="152"/>
    </location>
</feature>
<feature type="sequence conflict" description="In Ref. 2; CAA46481." evidence="5" ref="2">
    <original>I</original>
    <variation>M</variation>
    <location>
        <position position="171"/>
    </location>
</feature>
<feature type="sequence conflict" description="In Ref. 2; CAA46481." evidence="5" ref="2">
    <original>A</original>
    <variation>V</variation>
    <location>
        <position position="174"/>
    </location>
</feature>
<feature type="sequence conflict" description="In Ref. 2; CAA46481." evidence="5" ref="2">
    <original>L</original>
    <variation>H</variation>
    <location>
        <position position="662"/>
    </location>
</feature>
<accession>P12569</accession>
<accession>Q65991</accession>
<proteinExistence type="evidence at protein level"/>
<dbReference type="EMBL" id="M21849">
    <property type="protein sequence ID" value="AAA42878.1"/>
    <property type="molecule type" value="Genomic_RNA"/>
</dbReference>
<dbReference type="EMBL" id="X65509">
    <property type="protein sequence ID" value="CAA46481.1"/>
    <property type="molecule type" value="Genomic_RNA"/>
</dbReference>
<dbReference type="PIR" id="JS0321">
    <property type="entry name" value="VGNZCD"/>
</dbReference>
<dbReference type="PIR" id="S21382">
    <property type="entry name" value="S21382"/>
</dbReference>
<dbReference type="SMR" id="P12569"/>
<dbReference type="GlyCosmos" id="P12569">
    <property type="glycosylation" value="3 sites, No reported glycans"/>
</dbReference>
<dbReference type="GO" id="GO:0020002">
    <property type="term" value="C:host cell plasma membrane"/>
    <property type="evidence" value="ECO:0007669"/>
    <property type="project" value="UniProtKB-SubCell"/>
</dbReference>
<dbReference type="GO" id="GO:0016020">
    <property type="term" value="C:membrane"/>
    <property type="evidence" value="ECO:0007669"/>
    <property type="project" value="UniProtKB-KW"/>
</dbReference>
<dbReference type="GO" id="GO:0019031">
    <property type="term" value="C:viral envelope"/>
    <property type="evidence" value="ECO:0007669"/>
    <property type="project" value="UniProtKB-KW"/>
</dbReference>
<dbReference type="GO" id="GO:0055036">
    <property type="term" value="C:virion membrane"/>
    <property type="evidence" value="ECO:0007669"/>
    <property type="project" value="UniProtKB-SubCell"/>
</dbReference>
<dbReference type="GO" id="GO:0019064">
    <property type="term" value="P:fusion of virus membrane with host plasma membrane"/>
    <property type="evidence" value="ECO:0007669"/>
    <property type="project" value="UniProtKB-KW"/>
</dbReference>
<dbReference type="GO" id="GO:0046718">
    <property type="term" value="P:symbiont entry into host cell"/>
    <property type="evidence" value="ECO:0007669"/>
    <property type="project" value="UniProtKB-KW"/>
</dbReference>
<dbReference type="Gene3D" id="1.10.287.2480">
    <property type="match status" value="1"/>
</dbReference>
<dbReference type="Gene3D" id="6.10.10.110">
    <property type="match status" value="1"/>
</dbReference>
<dbReference type="Gene3D" id="2.60.40.1690">
    <property type="entry name" value="Head and neck region of the ectodomain of NDV fusion glycoprotein"/>
    <property type="match status" value="1"/>
</dbReference>
<dbReference type="Gene3D" id="2.40.490.10">
    <property type="entry name" value="Newcastle disease virus like domain"/>
    <property type="match status" value="1"/>
</dbReference>
<dbReference type="InterPro" id="IPR000776">
    <property type="entry name" value="Fusion_F0_Paramyxovir"/>
</dbReference>
<dbReference type="Pfam" id="PF00523">
    <property type="entry name" value="Fusion_gly"/>
    <property type="match status" value="1"/>
</dbReference>
<dbReference type="SUPFAM" id="SSF69922">
    <property type="entry name" value="Head and neck region of the ectodomain of NDV fusion glycoprotein"/>
    <property type="match status" value="1"/>
</dbReference>
<dbReference type="SUPFAM" id="SSF58069">
    <property type="entry name" value="Virus ectodomain"/>
    <property type="match status" value="1"/>
</dbReference>
<keyword id="KW-0165">Cleavage on pair of basic residues</keyword>
<keyword id="KW-0175">Coiled coil</keyword>
<keyword id="KW-1015">Disulfide bond</keyword>
<keyword id="KW-1169">Fusion of virus membrane with host cell membrane</keyword>
<keyword id="KW-1168">Fusion of virus membrane with host membrane</keyword>
<keyword id="KW-0325">Glycoprotein</keyword>
<keyword id="KW-1032">Host cell membrane</keyword>
<keyword id="KW-1043">Host membrane</keyword>
<keyword id="KW-0472">Membrane</keyword>
<keyword id="KW-0732">Signal</keyword>
<keyword id="KW-0812">Transmembrane</keyword>
<keyword id="KW-1133">Transmembrane helix</keyword>
<keyword id="KW-0261">Viral envelope protein</keyword>
<keyword id="KW-1162">Viral penetration into host cytoplasm</keyword>
<keyword id="KW-0946">Virion</keyword>
<keyword id="KW-1160">Virus entry into host cell</keyword>
<gene>
    <name type="primary">F</name>
</gene>
<comment type="function">
    <text evidence="1">Class I viral fusion protein. Under the current model, the protein has at least 3 conformational states: pre-fusion native state, pre-hairpin intermediate state, and post-fusion hairpin state. During viral and plasma cell membrane fusion, the heptad repeat (HR) regions assume a trimer-of-hairpins structure, positioning the fusion peptide in close proximity to the C-terminal region of the ectodomain. The formation of this structure appears to drive apposition and subsequent fusion of viral and plasma cell membranes. Directs fusion of viral and cellular membranes leading to delivery of the nucleocapsid into the cytoplasm. This fusion is pH independent and occurs directly at the outer cell membrane. The trimer of F1-F2 (F protein) probably interacts with H at the virion surface. Upon HN binding to its cellular receptor, the hydrophobic fusion peptide is unmasked and interacts with the cellular membrane, inducing the fusion between cell and virion membranes. Later in infection, F proteins expressed at the plasma membrane of infected cells could mediate fusion with adjacent cells to form syncytia, a cytopathic effect that could lead to tissue necrosis (By similarity).</text>
</comment>
<comment type="subunit">
    <text evidence="1">Homotrimer of disulfide-linked F1-F2.</text>
</comment>
<comment type="subcellular location">
    <subcellularLocation>
        <location evidence="1">Virion membrane</location>
        <topology evidence="1">Single-pass type I membrane protein</topology>
    </subcellularLocation>
    <subcellularLocation>
        <location evidence="1">Host cell membrane</location>
        <topology evidence="1">Single-pass membrane protein</topology>
    </subcellularLocation>
</comment>
<comment type="PTM">
    <text evidence="1">The inactive precursor F0 is glycosylated and proteolytically cleaved into F1 and F2 to be functionally active. The cleavage is mediated by cellular proteases during the transport and maturation of the polypeptide (By similarity).</text>
</comment>
<comment type="similarity">
    <text evidence="5">Belongs to the paramyxoviruses fusion glycoprotein family.</text>
</comment>
<comment type="caution">
    <text evidence="5">The N-terminal extension is not a classical signal sequence. Its cleavage is post-translational and occurs before the mature protein is transported to the cell surface. This unusual signal sequence has a negative regulatory effect on F protein activity.</text>
</comment>